<evidence type="ECO:0000250" key="1">
    <source>
        <dbReference type="UniProtKB" id="P60010"/>
    </source>
</evidence>
<evidence type="ECO:0000305" key="2"/>
<gene>
    <name type="primary">ACT1</name>
    <name type="ordered locus">ABR222W</name>
</gene>
<sequence length="376" mass="41733">MDSGEVAALVIDNGSGMCKAGFAGDDAPRAVFPSIVGRPRHQGIMVGMGQKDSYVGDEAQSKRGILTLRYPIEHGIVTNWDDMEKIWHHTFYNELRVAPEEHPVLLTEAPMNPKSNREKMTQIMFETFNVPAFYVSIQAVLSLYSSGRTTGIVLDSGDGVTHVVPIYAGFSLPHAILRIDLAGRDMTDYLMKILSERGYSFSTTAEREIVRDIKEKLCYVALDFEQEMQTAAQSSAIEKSYELPDGQVITIGNERFRAPEALFHPSVLGLEAAGIDQTTYNSIMKCDVDVRKELYGNIVMSGGTTMFPGIAERMQKEITALAPSSMKVKIIAPPERKYSVWIGGSILASLTTFQQMWISKQEYDESGPSIVHHKCF</sequence>
<keyword id="KW-0067">ATP-binding</keyword>
<keyword id="KW-0963">Cytoplasm</keyword>
<keyword id="KW-0206">Cytoskeleton</keyword>
<keyword id="KW-0378">Hydrolase</keyword>
<keyword id="KW-0547">Nucleotide-binding</keyword>
<keyword id="KW-1185">Reference proteome</keyword>
<comment type="function">
    <text>Actins are highly conserved proteins that are involved in various types of cell motility and are ubiquitously expressed in all eukaryotic cells.</text>
</comment>
<comment type="catalytic activity">
    <reaction evidence="1">
        <text>ATP + H2O = ADP + phosphate + H(+)</text>
        <dbReference type="Rhea" id="RHEA:13065"/>
        <dbReference type="ChEBI" id="CHEBI:15377"/>
        <dbReference type="ChEBI" id="CHEBI:15378"/>
        <dbReference type="ChEBI" id="CHEBI:30616"/>
        <dbReference type="ChEBI" id="CHEBI:43474"/>
        <dbReference type="ChEBI" id="CHEBI:456216"/>
    </reaction>
</comment>
<comment type="subcellular location">
    <subcellularLocation>
        <location>Cytoplasm</location>
        <location>Cytoskeleton</location>
    </subcellularLocation>
</comment>
<comment type="similarity">
    <text evidence="2">Belongs to the actin family.</text>
</comment>
<feature type="chain" id="PRO_0000088898" description="Actin">
    <location>
        <begin position="1"/>
        <end position="376"/>
    </location>
</feature>
<reference key="1">
    <citation type="journal article" date="2004" name="Science">
        <title>The Ashbya gossypii genome as a tool for mapping the ancient Saccharomyces cerevisiae genome.</title>
        <authorList>
            <person name="Dietrich F.S."/>
            <person name="Voegeli S."/>
            <person name="Brachat S."/>
            <person name="Lerch A."/>
            <person name="Gates K."/>
            <person name="Steiner S."/>
            <person name="Mohr C."/>
            <person name="Poehlmann R."/>
            <person name="Luedi P."/>
            <person name="Choi S."/>
            <person name="Wing R.A."/>
            <person name="Flavier A."/>
            <person name="Gaffney T.D."/>
            <person name="Philippsen P."/>
        </authorList>
    </citation>
    <scope>NUCLEOTIDE SEQUENCE [LARGE SCALE GENOMIC DNA]</scope>
    <source>
        <strain>ATCC 10895 / CBS 109.51 / FGSC 9923 / NRRL Y-1056</strain>
    </source>
</reference>
<reference key="2">
    <citation type="journal article" date="2013" name="G3 (Bethesda)">
        <title>Genomes of Ashbya fungi isolated from insects reveal four mating-type loci, numerous translocations, lack of transposons, and distinct gene duplications.</title>
        <authorList>
            <person name="Dietrich F.S."/>
            <person name="Voegeli S."/>
            <person name="Kuo S."/>
            <person name="Philippsen P."/>
        </authorList>
    </citation>
    <scope>GENOME REANNOTATION</scope>
    <source>
        <strain>ATCC 10895 / CBS 109.51 / FGSC 9923 / NRRL Y-1056</strain>
    </source>
</reference>
<reference key="3">
    <citation type="submission" date="2003-12" db="EMBL/GenBank/DDBJ databases">
        <title>Molecular phylogeny and evolution of Candida and related species within the order saccharomycetales as inferred from multilocus sequence analysis.</title>
        <authorList>
            <person name="Diezmann S."/>
            <person name="Cox C.J."/>
            <person name="Schoenian G."/>
            <person name="Vilgalys R.J."/>
            <person name="Mitchell T.G."/>
        </authorList>
    </citation>
    <scope>NUCLEOTIDE SEQUENCE OF 83-245</scope>
    <source>
        <strain>ATCC 8717 / IMI 31268</strain>
    </source>
</reference>
<reference key="4">
    <citation type="journal article" date="1999" name="FEBS Lett.">
        <title>Isocitrate lyase of Ashbya gossypii -- transcriptional regulation and peroxisomal localization.</title>
        <authorList>
            <person name="Maeting I."/>
            <person name="Schmidt G."/>
            <person name="Sahm H."/>
            <person name="Revuelta J.L."/>
            <person name="Stierhof Y.D."/>
            <person name="Stahmann K.-P."/>
        </authorList>
    </citation>
    <scope>NUCLEOTIDE SEQUENCE [MRNA] OF 96-376</scope>
</reference>
<proteinExistence type="evidence at transcript level"/>
<accession>Q75D00</accession>
<accession>O94209</accession>
<accession>Q6JEJ0</accession>
<protein>
    <recommendedName>
        <fullName>Actin</fullName>
        <ecNumber evidence="1">3.6.4.-</ecNumber>
    </recommendedName>
</protein>
<organism>
    <name type="scientific">Eremothecium gossypii (strain ATCC 10895 / CBS 109.51 / FGSC 9923 / NRRL Y-1056)</name>
    <name type="common">Yeast</name>
    <name type="synonym">Ashbya gossypii</name>
    <dbReference type="NCBI Taxonomy" id="284811"/>
    <lineage>
        <taxon>Eukaryota</taxon>
        <taxon>Fungi</taxon>
        <taxon>Dikarya</taxon>
        <taxon>Ascomycota</taxon>
        <taxon>Saccharomycotina</taxon>
        <taxon>Saccharomycetes</taxon>
        <taxon>Saccharomycetales</taxon>
        <taxon>Saccharomycetaceae</taxon>
        <taxon>Eremothecium</taxon>
    </lineage>
</organism>
<name>ACT_EREGS</name>
<dbReference type="EC" id="3.6.4.-" evidence="1"/>
<dbReference type="EMBL" id="AE016815">
    <property type="protein sequence ID" value="AAS50995.1"/>
    <property type="molecule type" value="Genomic_DNA"/>
</dbReference>
<dbReference type="EMBL" id="AY497588">
    <property type="protein sequence ID" value="AAT12516.1"/>
    <property type="molecule type" value="Genomic_DNA"/>
</dbReference>
<dbReference type="EMBL" id="AJ131713">
    <property type="protein sequence ID" value="CAB38636.1"/>
    <property type="molecule type" value="mRNA"/>
</dbReference>
<dbReference type="RefSeq" id="NP_983171.1">
    <property type="nucleotide sequence ID" value="NM_208524.1"/>
</dbReference>
<dbReference type="SMR" id="Q75D00"/>
<dbReference type="FunCoup" id="Q75D00">
    <property type="interactions" value="1518"/>
</dbReference>
<dbReference type="STRING" id="284811.Q75D00"/>
<dbReference type="EnsemblFungi" id="AAS50995">
    <property type="protein sequence ID" value="AAS50995"/>
    <property type="gene ID" value="AGOS_ABR222W"/>
</dbReference>
<dbReference type="GeneID" id="4619281"/>
<dbReference type="KEGG" id="ago:AGOS_ABR222W"/>
<dbReference type="eggNOG" id="KOG0676">
    <property type="taxonomic scope" value="Eukaryota"/>
</dbReference>
<dbReference type="HOGENOM" id="CLU_027965_0_2_1"/>
<dbReference type="InParanoid" id="Q75D00"/>
<dbReference type="OMA" id="FHTTAER"/>
<dbReference type="OrthoDB" id="5132116at2759"/>
<dbReference type="Proteomes" id="UP000000591">
    <property type="component" value="Chromosome II"/>
</dbReference>
<dbReference type="GO" id="GO:0015629">
    <property type="term" value="C:actin cytoskeleton"/>
    <property type="evidence" value="ECO:0000318"/>
    <property type="project" value="GO_Central"/>
</dbReference>
<dbReference type="GO" id="GO:0005737">
    <property type="term" value="C:cytoplasm"/>
    <property type="evidence" value="ECO:0007669"/>
    <property type="project" value="UniProtKB-KW"/>
</dbReference>
<dbReference type="GO" id="GO:0005524">
    <property type="term" value="F:ATP binding"/>
    <property type="evidence" value="ECO:0007669"/>
    <property type="project" value="UniProtKB-KW"/>
</dbReference>
<dbReference type="GO" id="GO:0016787">
    <property type="term" value="F:hydrolase activity"/>
    <property type="evidence" value="ECO:0007669"/>
    <property type="project" value="UniProtKB-KW"/>
</dbReference>
<dbReference type="CDD" id="cd10224">
    <property type="entry name" value="ASKHA_NBD_actin"/>
    <property type="match status" value="1"/>
</dbReference>
<dbReference type="FunFam" id="3.30.420.40:FF:000148">
    <property type="entry name" value="Actin, alpha skeletal muscle"/>
    <property type="match status" value="1"/>
</dbReference>
<dbReference type="FunFam" id="3.90.640.10:FF:000001">
    <property type="entry name" value="Actin, muscle"/>
    <property type="match status" value="1"/>
</dbReference>
<dbReference type="FunFam" id="3.30.420.40:FF:000404">
    <property type="entry name" value="Major actin"/>
    <property type="match status" value="1"/>
</dbReference>
<dbReference type="FunFam" id="3.30.420.40:FF:000058">
    <property type="entry name" value="Putative actin-related protein 5"/>
    <property type="match status" value="1"/>
</dbReference>
<dbReference type="Gene3D" id="3.30.420.40">
    <property type="match status" value="2"/>
</dbReference>
<dbReference type="Gene3D" id="3.90.640.10">
    <property type="entry name" value="Actin, Chain A, domain 4"/>
    <property type="match status" value="1"/>
</dbReference>
<dbReference type="InterPro" id="IPR004000">
    <property type="entry name" value="Actin"/>
</dbReference>
<dbReference type="InterPro" id="IPR020902">
    <property type="entry name" value="Actin/actin-like_CS"/>
</dbReference>
<dbReference type="InterPro" id="IPR004001">
    <property type="entry name" value="Actin_CS"/>
</dbReference>
<dbReference type="InterPro" id="IPR043129">
    <property type="entry name" value="ATPase_NBD"/>
</dbReference>
<dbReference type="PANTHER" id="PTHR11937">
    <property type="entry name" value="ACTIN"/>
    <property type="match status" value="1"/>
</dbReference>
<dbReference type="Pfam" id="PF00022">
    <property type="entry name" value="Actin"/>
    <property type="match status" value="1"/>
</dbReference>
<dbReference type="PRINTS" id="PR00190">
    <property type="entry name" value="ACTIN"/>
</dbReference>
<dbReference type="SMART" id="SM00268">
    <property type="entry name" value="ACTIN"/>
    <property type="match status" value="1"/>
</dbReference>
<dbReference type="SUPFAM" id="SSF53067">
    <property type="entry name" value="Actin-like ATPase domain"/>
    <property type="match status" value="2"/>
</dbReference>
<dbReference type="PROSITE" id="PS00406">
    <property type="entry name" value="ACTINS_1"/>
    <property type="match status" value="1"/>
</dbReference>
<dbReference type="PROSITE" id="PS00432">
    <property type="entry name" value="ACTINS_2"/>
    <property type="match status" value="1"/>
</dbReference>
<dbReference type="PROSITE" id="PS01132">
    <property type="entry name" value="ACTINS_ACT_LIKE"/>
    <property type="match status" value="1"/>
</dbReference>